<protein>
    <recommendedName>
        <fullName evidence="1">Acetyl-coenzyme A carboxylase carboxyl transferase subunit alpha</fullName>
        <shortName evidence="1">ACCase subunit alpha</shortName>
        <shortName evidence="1">Acetyl-CoA carboxylase carboxyltransferase subunit alpha</shortName>
        <ecNumber evidence="1">2.1.3.15</ecNumber>
    </recommendedName>
</protein>
<keyword id="KW-0067">ATP-binding</keyword>
<keyword id="KW-0963">Cytoplasm</keyword>
<keyword id="KW-0275">Fatty acid biosynthesis</keyword>
<keyword id="KW-0276">Fatty acid metabolism</keyword>
<keyword id="KW-0444">Lipid biosynthesis</keyword>
<keyword id="KW-0443">Lipid metabolism</keyword>
<keyword id="KW-0547">Nucleotide-binding</keyword>
<keyword id="KW-0808">Transferase</keyword>
<accession>B0RW82</accession>
<organism>
    <name type="scientific">Xanthomonas campestris pv. campestris (strain B100)</name>
    <dbReference type="NCBI Taxonomy" id="509169"/>
    <lineage>
        <taxon>Bacteria</taxon>
        <taxon>Pseudomonadati</taxon>
        <taxon>Pseudomonadota</taxon>
        <taxon>Gammaproteobacteria</taxon>
        <taxon>Lysobacterales</taxon>
        <taxon>Lysobacteraceae</taxon>
        <taxon>Xanthomonas</taxon>
    </lineage>
</organism>
<evidence type="ECO:0000255" key="1">
    <source>
        <dbReference type="HAMAP-Rule" id="MF_00823"/>
    </source>
</evidence>
<evidence type="ECO:0000255" key="2">
    <source>
        <dbReference type="PROSITE-ProRule" id="PRU01137"/>
    </source>
</evidence>
<proteinExistence type="inferred from homology"/>
<dbReference type="EC" id="2.1.3.15" evidence="1"/>
<dbReference type="EMBL" id="AM920689">
    <property type="protein sequence ID" value="CAP52300.1"/>
    <property type="molecule type" value="Genomic_DNA"/>
</dbReference>
<dbReference type="SMR" id="B0RW82"/>
<dbReference type="KEGG" id="xca:xcc-b100_2939"/>
<dbReference type="HOGENOM" id="CLU_015486_0_2_6"/>
<dbReference type="UniPathway" id="UPA00655">
    <property type="reaction ID" value="UER00711"/>
</dbReference>
<dbReference type="Proteomes" id="UP000001188">
    <property type="component" value="Chromosome"/>
</dbReference>
<dbReference type="GO" id="GO:0009317">
    <property type="term" value="C:acetyl-CoA carboxylase complex"/>
    <property type="evidence" value="ECO:0007669"/>
    <property type="project" value="InterPro"/>
</dbReference>
<dbReference type="GO" id="GO:0003989">
    <property type="term" value="F:acetyl-CoA carboxylase activity"/>
    <property type="evidence" value="ECO:0007669"/>
    <property type="project" value="InterPro"/>
</dbReference>
<dbReference type="GO" id="GO:0005524">
    <property type="term" value="F:ATP binding"/>
    <property type="evidence" value="ECO:0007669"/>
    <property type="project" value="UniProtKB-KW"/>
</dbReference>
<dbReference type="GO" id="GO:0016743">
    <property type="term" value="F:carboxyl- or carbamoyltransferase activity"/>
    <property type="evidence" value="ECO:0007669"/>
    <property type="project" value="UniProtKB-UniRule"/>
</dbReference>
<dbReference type="GO" id="GO:0006633">
    <property type="term" value="P:fatty acid biosynthetic process"/>
    <property type="evidence" value="ECO:0007669"/>
    <property type="project" value="UniProtKB-KW"/>
</dbReference>
<dbReference type="GO" id="GO:2001295">
    <property type="term" value="P:malonyl-CoA biosynthetic process"/>
    <property type="evidence" value="ECO:0007669"/>
    <property type="project" value="UniProtKB-UniRule"/>
</dbReference>
<dbReference type="FunFam" id="3.90.226.10:FF:000008">
    <property type="entry name" value="Acetyl-coenzyme A carboxylase carboxyl transferase subunit alpha"/>
    <property type="match status" value="1"/>
</dbReference>
<dbReference type="Gene3D" id="3.90.226.10">
    <property type="entry name" value="2-enoyl-CoA Hydratase, Chain A, domain 1"/>
    <property type="match status" value="1"/>
</dbReference>
<dbReference type="HAMAP" id="MF_00823">
    <property type="entry name" value="AcetylCoA_CT_alpha"/>
    <property type="match status" value="1"/>
</dbReference>
<dbReference type="InterPro" id="IPR001095">
    <property type="entry name" value="Acetyl_CoA_COase_a_su"/>
</dbReference>
<dbReference type="InterPro" id="IPR029045">
    <property type="entry name" value="ClpP/crotonase-like_dom_sf"/>
</dbReference>
<dbReference type="InterPro" id="IPR011763">
    <property type="entry name" value="COA_CT_C"/>
</dbReference>
<dbReference type="NCBIfam" id="TIGR00513">
    <property type="entry name" value="accA"/>
    <property type="match status" value="1"/>
</dbReference>
<dbReference type="NCBIfam" id="NF041504">
    <property type="entry name" value="AccA_sub"/>
    <property type="match status" value="1"/>
</dbReference>
<dbReference type="NCBIfam" id="NF004344">
    <property type="entry name" value="PRK05724.1"/>
    <property type="match status" value="1"/>
</dbReference>
<dbReference type="PANTHER" id="PTHR42853">
    <property type="entry name" value="ACETYL-COENZYME A CARBOXYLASE CARBOXYL TRANSFERASE SUBUNIT ALPHA"/>
    <property type="match status" value="1"/>
</dbReference>
<dbReference type="PANTHER" id="PTHR42853:SF3">
    <property type="entry name" value="ACETYL-COENZYME A CARBOXYLASE CARBOXYL TRANSFERASE SUBUNIT ALPHA, CHLOROPLASTIC"/>
    <property type="match status" value="1"/>
</dbReference>
<dbReference type="Pfam" id="PF03255">
    <property type="entry name" value="ACCA"/>
    <property type="match status" value="1"/>
</dbReference>
<dbReference type="PRINTS" id="PR01069">
    <property type="entry name" value="ACCCTRFRASEA"/>
</dbReference>
<dbReference type="SUPFAM" id="SSF52096">
    <property type="entry name" value="ClpP/crotonase"/>
    <property type="match status" value="1"/>
</dbReference>
<dbReference type="PROSITE" id="PS50989">
    <property type="entry name" value="COA_CT_CTER"/>
    <property type="match status" value="1"/>
</dbReference>
<comment type="function">
    <text evidence="1">Component of the acetyl coenzyme A carboxylase (ACC) complex. First, biotin carboxylase catalyzes the carboxylation of biotin on its carrier protein (BCCP) and then the CO(2) group is transferred by the carboxyltransferase to acetyl-CoA to form malonyl-CoA.</text>
</comment>
<comment type="catalytic activity">
    <reaction evidence="1">
        <text>N(6)-carboxybiotinyl-L-lysyl-[protein] + acetyl-CoA = N(6)-biotinyl-L-lysyl-[protein] + malonyl-CoA</text>
        <dbReference type="Rhea" id="RHEA:54728"/>
        <dbReference type="Rhea" id="RHEA-COMP:10505"/>
        <dbReference type="Rhea" id="RHEA-COMP:10506"/>
        <dbReference type="ChEBI" id="CHEBI:57288"/>
        <dbReference type="ChEBI" id="CHEBI:57384"/>
        <dbReference type="ChEBI" id="CHEBI:83144"/>
        <dbReference type="ChEBI" id="CHEBI:83145"/>
        <dbReference type="EC" id="2.1.3.15"/>
    </reaction>
</comment>
<comment type="pathway">
    <text evidence="1">Lipid metabolism; malonyl-CoA biosynthesis; malonyl-CoA from acetyl-CoA: step 1/1.</text>
</comment>
<comment type="subunit">
    <text evidence="1">Acetyl-CoA carboxylase is a heterohexamer composed of biotin carboxyl carrier protein (AccB), biotin carboxylase (AccC) and two subunits each of ACCase subunit alpha (AccA) and ACCase subunit beta (AccD).</text>
</comment>
<comment type="subcellular location">
    <subcellularLocation>
        <location evidence="1">Cytoplasm</location>
    </subcellularLocation>
</comment>
<comment type="similarity">
    <text evidence="1">Belongs to the AccA family.</text>
</comment>
<sequence>MNPNYLDFEQPIADLEAKIQELRKASTGPAVNVDAEVRALRDKLRVRTAQIFRDLSAWQVSQLARHPQRPYTLDYINTMCDEFQELAGDRAYADDKAIVGGLGRIDGRPVVIIGHQKGRDTKSKVARNFGMPRPEGYRKALRLMKLAERFRLPLLTFIDTPGAYPGIGAEERGQSEAIARNLMEMAELKVPVICTVIGEGGSGGALAIGVGDRTLMLEYGTYSVISPEGCASILWKDAAKAKDAAEQLGLTAKRLKGLGLVDKVIREPTGGAHRNPEQMGKRLKAVLLNELDALEKVPVDALMQQRYERLRSYGAYEGH</sequence>
<feature type="chain" id="PRO_1000134535" description="Acetyl-coenzyme A carboxylase carboxyl transferase subunit alpha">
    <location>
        <begin position="1"/>
        <end position="319"/>
    </location>
</feature>
<feature type="domain" description="CoA carboxyltransferase C-terminal" evidence="2">
    <location>
        <begin position="32"/>
        <end position="293"/>
    </location>
</feature>
<reference key="1">
    <citation type="journal article" date="2008" name="J. Biotechnol.">
        <title>The genome of Xanthomonas campestris pv. campestris B100 and its use for the reconstruction of metabolic pathways involved in xanthan biosynthesis.</title>
        <authorList>
            <person name="Vorhoelter F.-J."/>
            <person name="Schneiker S."/>
            <person name="Goesmann A."/>
            <person name="Krause L."/>
            <person name="Bekel T."/>
            <person name="Kaiser O."/>
            <person name="Linke B."/>
            <person name="Patschkowski T."/>
            <person name="Rueckert C."/>
            <person name="Schmid J."/>
            <person name="Sidhu V.K."/>
            <person name="Sieber V."/>
            <person name="Tauch A."/>
            <person name="Watt S.A."/>
            <person name="Weisshaar B."/>
            <person name="Becker A."/>
            <person name="Niehaus K."/>
            <person name="Puehler A."/>
        </authorList>
    </citation>
    <scope>NUCLEOTIDE SEQUENCE [LARGE SCALE GENOMIC DNA]</scope>
    <source>
        <strain>B100</strain>
    </source>
</reference>
<gene>
    <name evidence="1" type="primary">accA</name>
    <name type="ordered locus">xcc-b100_2939</name>
</gene>
<name>ACCA_XANCB</name>